<reference key="1">
    <citation type="journal article" date="2021" name="Angew. Chem. Int. Ed.">
        <title>Biosynthetic studies of phomopsins unveil posttranslational installation of dehydroamino acids by ustYa family proteins.</title>
        <authorList>
            <person name="Sogahata K."/>
            <person name="Ozaki T."/>
            <person name="Igarashi Y."/>
            <person name="Naganuma Y."/>
            <person name="Liu C."/>
            <person name="Minami A."/>
            <person name="Oikawa H."/>
        </authorList>
    </citation>
    <scope>NUCLEOTIDE SEQUENCE [GENOMIC DNA]</scope>
    <scope>FUNCTION</scope>
    <scope>DISRUPTION PHENOTYPE</scope>
    <scope>PATHWAY</scope>
    <source>
        <strain>ATCC 26115 / IMI 115107 / C 1557</strain>
    </source>
</reference>
<dbReference type="EC" id="1.-.-.-" evidence="7"/>
<dbReference type="EMBL" id="LC646903">
    <property type="protein sequence ID" value="BDA39148.1"/>
    <property type="molecule type" value="Genomic_DNA"/>
</dbReference>
<dbReference type="GO" id="GO:0016020">
    <property type="term" value="C:membrane"/>
    <property type="evidence" value="ECO:0007669"/>
    <property type="project" value="UniProtKB-SubCell"/>
</dbReference>
<dbReference type="GO" id="GO:0016491">
    <property type="term" value="F:oxidoreductase activity"/>
    <property type="evidence" value="ECO:0007669"/>
    <property type="project" value="UniProtKB-KW"/>
</dbReference>
<dbReference type="GO" id="GO:0043386">
    <property type="term" value="P:mycotoxin biosynthetic process"/>
    <property type="evidence" value="ECO:0007669"/>
    <property type="project" value="InterPro"/>
</dbReference>
<dbReference type="InterPro" id="IPR021765">
    <property type="entry name" value="UstYa-like"/>
</dbReference>
<dbReference type="PANTHER" id="PTHR33365:SF4">
    <property type="entry name" value="CYCLOCHLOROTINE BIOSYNTHESIS PROTEIN O"/>
    <property type="match status" value="1"/>
</dbReference>
<dbReference type="PANTHER" id="PTHR33365">
    <property type="entry name" value="YALI0B05434P"/>
    <property type="match status" value="1"/>
</dbReference>
<dbReference type="Pfam" id="PF11807">
    <property type="entry name" value="UstYa"/>
    <property type="match status" value="1"/>
</dbReference>
<comment type="function">
    <text evidence="4 7">UstYa family oxidase; part of the gene cluster that mediates the biosynthesis of the phomopsins, a group of hexapeptide mycotoxins which infects lupins and causes lupinosis disease in livestock (PubMed:34608734). Within the pathway, phomYc catalyzes the desaturation of the Ile moiety into 2,3-dehydroisoleucine (dIle) (PubMed:34608734). The pathway starts with the processing of the precursor phomA by several endopeptidases including kexin proteases as well as the cluster-specific S41 family peptidase phomP1 and the oligopeptidase phomG to produce 10 identical copies of the hexapeptide Tyr-Val-Ile-Pro-Ile-Asp. After being excised from the precursor peptide, the core peptides are cyclized and modified post-translationally by enzymes encoded within the gene cluster. The timing and order of proteolysis of the phomA precursor and PTMs are still unknown. Two tyrosinase-like enzymes, phomQ1 and phomQ2, catalyze the chlorination and hydroxylation of Tyr, respectively. PhomYb, is proposed to be involved in the construction of the macrocyclic structure. The other 4 ustYa family proteins may be involved in PTMs that generate the unique structure of phomopsin A. PhomYa is required for the hydroxylation of C-beta of Tyr. PhomYc, phomYd, and phomYe are responsible for the biosynthesis of 2,3-dehydroisoleucine (dIle), 2,3-dehydroaspartic acid (dAsp), and 3,4-dehydroproline (dPro), respectively. While dIle formation by phomYc is indispensable for the installation of dAsp by phomYd, the order of the other PTMs have not been elucidated yet. Most of the biosynthetic enzymes likely have broad substrate specificity, and thus, there might be a metabolic grid from a precursor to phomopsin A. The enzyme(s) responsible for the biosynthesis of 3,4-dehydrovaline (dVal) have also not been identified yet. Finally, phomM acts as an S-adenosylmethionine-dependent alpha-N-methyltransferase that catalyzes two successive N-methylation reactions, converting N-desmethyl-phomopsin A to phomopsin A and phomopsin A further to an N,N-dimethylated congener called phomopsin E (Probable).</text>
</comment>
<comment type="pathway">
    <text evidence="4">Mycotoxin biosynthesis.</text>
</comment>
<comment type="subcellular location">
    <subcellularLocation>
        <location evidence="2">Membrane</location>
        <topology evidence="2">Single-pass membrane protein</topology>
    </subcellularLocation>
</comment>
<comment type="domain">
    <text evidence="1">The 2 HXXHC motifs are conserved in ustYa family proteins and might form active sites.</text>
</comment>
<comment type="disruption phenotype">
    <text evidence="4">Abolishes the formation of phomopsin A and leads to the accumulation an intermediate with no modified Ile moiety.</text>
</comment>
<comment type="similarity">
    <text evidence="6">Belongs to the ustYa family.</text>
</comment>
<sequence length="256" mass="29776">MDRSGYFPVLDEDIPTKSELRLPLESKTSSRSRRWLHLVLVLQFVLIISLLASLHILGNRQPSNITCAKQLSPYSPYLEDGDLELEEFTELNHLMQPSPYRGQPTPEIEEAWVRLWRVPMIGFPETKMINLNKTNPQDYAHVSTRYGDDMLGFLNVFHQLHCLNLVRQYTYRDDYDYSNVTAFRAPQELVRGHIDHCIETIRKSIMCASDVTPVVFQLDDSRKSGFKSDFNMRRTCRNFDKIQDWAVANAVQGDFE</sequence>
<gene>
    <name evidence="5" type="primary">phomYc</name>
</gene>
<name>PHYC1_DIALO</name>
<feature type="chain" id="PRO_0000458338" description="UstYa family oxidase phomYc">
    <location>
        <begin position="1"/>
        <end position="256"/>
    </location>
</feature>
<feature type="transmembrane region" description="Helical" evidence="2">
    <location>
        <begin position="38"/>
        <end position="58"/>
    </location>
</feature>
<feature type="short sequence motif" description="HXXHC 1" evidence="1">
    <location>
        <begin position="158"/>
        <end position="162"/>
    </location>
</feature>
<feature type="short sequence motif" description="HXXHC 2" evidence="1">
    <location>
        <begin position="193"/>
        <end position="197"/>
    </location>
</feature>
<feature type="glycosylation site" description="N-linked (GlcNAc...) asparagine" evidence="3">
    <location>
        <position position="64"/>
    </location>
</feature>
<feature type="glycosylation site" description="N-linked (GlcNAc...) asparagine" evidence="3">
    <location>
        <position position="132"/>
    </location>
</feature>
<feature type="glycosylation site" description="N-linked (GlcNAc...) asparagine" evidence="3">
    <location>
        <position position="179"/>
    </location>
</feature>
<proteinExistence type="inferred from homology"/>
<keyword id="KW-0325">Glycoprotein</keyword>
<keyword id="KW-0472">Membrane</keyword>
<keyword id="KW-0560">Oxidoreductase</keyword>
<keyword id="KW-0812">Transmembrane</keyword>
<keyword id="KW-1133">Transmembrane helix</keyword>
<keyword id="KW-0843">Virulence</keyword>
<organism>
    <name type="scientific">Diaporthe leptostromiformis</name>
    <name type="common">Lupinosis disease fungus</name>
    <name type="synonym">Phomopsis leptostromiformis</name>
    <dbReference type="NCBI Taxonomy" id="291059"/>
    <lineage>
        <taxon>Eukaryota</taxon>
        <taxon>Fungi</taxon>
        <taxon>Dikarya</taxon>
        <taxon>Ascomycota</taxon>
        <taxon>Pezizomycotina</taxon>
        <taxon>Sordariomycetes</taxon>
        <taxon>Sordariomycetidae</taxon>
        <taxon>Diaporthales</taxon>
        <taxon>Diaporthaceae</taxon>
        <taxon>Diaporthe</taxon>
    </lineage>
</organism>
<protein>
    <recommendedName>
        <fullName evidence="5">UstYa family oxidase phomYc</fullName>
        <ecNumber evidence="7">1.-.-.-</ecNumber>
    </recommendedName>
    <alternativeName>
        <fullName evidence="5">Phomopsin biosynthesis cluster protein Yc</fullName>
    </alternativeName>
</protein>
<accession>A0A8K1Y6E0</accession>
<evidence type="ECO:0000250" key="1">
    <source>
        <dbReference type="UniProtKB" id="B8NM67"/>
    </source>
</evidence>
<evidence type="ECO:0000255" key="2"/>
<evidence type="ECO:0000255" key="3">
    <source>
        <dbReference type="PROSITE-ProRule" id="PRU00498"/>
    </source>
</evidence>
<evidence type="ECO:0000269" key="4">
    <source>
    </source>
</evidence>
<evidence type="ECO:0000303" key="5">
    <source>
    </source>
</evidence>
<evidence type="ECO:0000305" key="6"/>
<evidence type="ECO:0000305" key="7">
    <source>
    </source>
</evidence>